<keyword id="KW-0479">Metal-binding</keyword>
<keyword id="KW-0665">Pyrimidine biosynthesis</keyword>
<keyword id="KW-0862">Zinc</keyword>
<sequence>MTHDNKLQVEAIKRGTVIDHIPAQVGFKLLTLFKLTATDQRITIGLNLPSNHLGRKDLIKIENIFLTEEQANQLAIYAPQATVNQIDDYDVVRKLVPTLPEHITGVLTCPNSNCISRSEPVSSSFSVKQRDGDVHLKCKYCEKEFERQAVLQDR</sequence>
<organism>
    <name type="scientific">Pectobacterium carotovorum subsp. carotovorum (strain PC1)</name>
    <dbReference type="NCBI Taxonomy" id="561230"/>
    <lineage>
        <taxon>Bacteria</taxon>
        <taxon>Pseudomonadati</taxon>
        <taxon>Pseudomonadota</taxon>
        <taxon>Gammaproteobacteria</taxon>
        <taxon>Enterobacterales</taxon>
        <taxon>Pectobacteriaceae</taxon>
        <taxon>Pectobacterium</taxon>
    </lineage>
</organism>
<feature type="chain" id="PRO_1000201613" description="Aspartate carbamoyltransferase regulatory chain">
    <location>
        <begin position="1"/>
        <end position="154"/>
    </location>
</feature>
<feature type="binding site" evidence="1">
    <location>
        <position position="109"/>
    </location>
    <ligand>
        <name>Zn(2+)</name>
        <dbReference type="ChEBI" id="CHEBI:29105"/>
    </ligand>
</feature>
<feature type="binding site" evidence="1">
    <location>
        <position position="114"/>
    </location>
    <ligand>
        <name>Zn(2+)</name>
        <dbReference type="ChEBI" id="CHEBI:29105"/>
    </ligand>
</feature>
<feature type="binding site" evidence="1">
    <location>
        <position position="138"/>
    </location>
    <ligand>
        <name>Zn(2+)</name>
        <dbReference type="ChEBI" id="CHEBI:29105"/>
    </ligand>
</feature>
<feature type="binding site" evidence="1">
    <location>
        <position position="141"/>
    </location>
    <ligand>
        <name>Zn(2+)</name>
        <dbReference type="ChEBI" id="CHEBI:29105"/>
    </ligand>
</feature>
<reference key="1">
    <citation type="submission" date="2009-07" db="EMBL/GenBank/DDBJ databases">
        <title>Complete sequence of Pectobacterium carotovorum subsp. carotovorum PC1.</title>
        <authorList>
            <consortium name="US DOE Joint Genome Institute"/>
            <person name="Lucas S."/>
            <person name="Copeland A."/>
            <person name="Lapidus A."/>
            <person name="Glavina del Rio T."/>
            <person name="Tice H."/>
            <person name="Bruce D."/>
            <person name="Goodwin L."/>
            <person name="Pitluck S."/>
            <person name="Munk A.C."/>
            <person name="Brettin T."/>
            <person name="Detter J.C."/>
            <person name="Han C."/>
            <person name="Tapia R."/>
            <person name="Larimer F."/>
            <person name="Land M."/>
            <person name="Hauser L."/>
            <person name="Kyrpides N."/>
            <person name="Mikhailova N."/>
            <person name="Balakrishnan V."/>
            <person name="Glasner J."/>
            <person name="Perna N.T."/>
        </authorList>
    </citation>
    <scope>NUCLEOTIDE SEQUENCE [LARGE SCALE GENOMIC DNA]</scope>
    <source>
        <strain>PC1</strain>
    </source>
</reference>
<evidence type="ECO:0000255" key="1">
    <source>
        <dbReference type="HAMAP-Rule" id="MF_00002"/>
    </source>
</evidence>
<name>PYRI_PECCP</name>
<gene>
    <name evidence="1" type="primary">pyrI</name>
    <name type="ordered locus">PC1_0366</name>
</gene>
<comment type="function">
    <text evidence="1">Involved in allosteric regulation of aspartate carbamoyltransferase.</text>
</comment>
<comment type="cofactor">
    <cofactor evidence="1">
        <name>Zn(2+)</name>
        <dbReference type="ChEBI" id="CHEBI:29105"/>
    </cofactor>
    <text evidence="1">Binds 1 zinc ion per subunit.</text>
</comment>
<comment type="subunit">
    <text evidence="1">Contains catalytic and regulatory chains.</text>
</comment>
<comment type="similarity">
    <text evidence="1">Belongs to the PyrI family.</text>
</comment>
<accession>C6DJL2</accession>
<proteinExistence type="inferred from homology"/>
<dbReference type="EMBL" id="CP001657">
    <property type="protein sequence ID" value="ACT11425.1"/>
    <property type="molecule type" value="Genomic_DNA"/>
</dbReference>
<dbReference type="RefSeq" id="WP_012773082.1">
    <property type="nucleotide sequence ID" value="NC_012917.1"/>
</dbReference>
<dbReference type="SMR" id="C6DJL2"/>
<dbReference type="STRING" id="561230.PC1_0366"/>
<dbReference type="KEGG" id="pct:PC1_0366"/>
<dbReference type="eggNOG" id="COG1781">
    <property type="taxonomic scope" value="Bacteria"/>
</dbReference>
<dbReference type="HOGENOM" id="CLU_128576_0_0_6"/>
<dbReference type="OrthoDB" id="5599321at2"/>
<dbReference type="Proteomes" id="UP000002736">
    <property type="component" value="Chromosome"/>
</dbReference>
<dbReference type="GO" id="GO:0009347">
    <property type="term" value="C:aspartate carbamoyltransferase complex"/>
    <property type="evidence" value="ECO:0007669"/>
    <property type="project" value="InterPro"/>
</dbReference>
<dbReference type="GO" id="GO:0046872">
    <property type="term" value="F:metal ion binding"/>
    <property type="evidence" value="ECO:0007669"/>
    <property type="project" value="UniProtKB-KW"/>
</dbReference>
<dbReference type="GO" id="GO:0006207">
    <property type="term" value="P:'de novo' pyrimidine nucleobase biosynthetic process"/>
    <property type="evidence" value="ECO:0007669"/>
    <property type="project" value="InterPro"/>
</dbReference>
<dbReference type="GO" id="GO:0006221">
    <property type="term" value="P:pyrimidine nucleotide biosynthetic process"/>
    <property type="evidence" value="ECO:0007669"/>
    <property type="project" value="UniProtKB-UniRule"/>
</dbReference>
<dbReference type="FunFam" id="3.30.70.140:FF:000001">
    <property type="entry name" value="Aspartate carbamoyltransferase regulatory chain"/>
    <property type="match status" value="1"/>
</dbReference>
<dbReference type="Gene3D" id="2.30.30.20">
    <property type="entry name" value="Aspartate carbamoyltransferase regulatory subunit, C-terminal domain"/>
    <property type="match status" value="1"/>
</dbReference>
<dbReference type="Gene3D" id="3.30.70.140">
    <property type="entry name" value="Aspartate carbamoyltransferase regulatory subunit, N-terminal domain"/>
    <property type="match status" value="1"/>
</dbReference>
<dbReference type="HAMAP" id="MF_00002">
    <property type="entry name" value="Asp_carb_tr_reg"/>
    <property type="match status" value="1"/>
</dbReference>
<dbReference type="InterPro" id="IPR020545">
    <property type="entry name" value="Asp_carbamoyltransf_reg_N"/>
</dbReference>
<dbReference type="InterPro" id="IPR002801">
    <property type="entry name" value="Asp_carbamoylTrfase_reg"/>
</dbReference>
<dbReference type="InterPro" id="IPR020542">
    <property type="entry name" value="Asp_carbamoyltrfase_reg_C"/>
</dbReference>
<dbReference type="InterPro" id="IPR036792">
    <property type="entry name" value="Asp_carbatrfase_reg_C_sf"/>
</dbReference>
<dbReference type="InterPro" id="IPR036793">
    <property type="entry name" value="Asp_carbatrfase_reg_N_sf"/>
</dbReference>
<dbReference type="NCBIfam" id="TIGR00240">
    <property type="entry name" value="ATCase_reg"/>
    <property type="match status" value="1"/>
</dbReference>
<dbReference type="PANTHER" id="PTHR35805">
    <property type="entry name" value="ASPARTATE CARBAMOYLTRANSFERASE REGULATORY CHAIN"/>
    <property type="match status" value="1"/>
</dbReference>
<dbReference type="PANTHER" id="PTHR35805:SF1">
    <property type="entry name" value="ASPARTATE CARBAMOYLTRANSFERASE REGULATORY CHAIN"/>
    <property type="match status" value="1"/>
</dbReference>
<dbReference type="Pfam" id="PF01948">
    <property type="entry name" value="PyrI"/>
    <property type="match status" value="1"/>
</dbReference>
<dbReference type="Pfam" id="PF02748">
    <property type="entry name" value="PyrI_C"/>
    <property type="match status" value="1"/>
</dbReference>
<dbReference type="SUPFAM" id="SSF57825">
    <property type="entry name" value="Aspartate carbamoyltransferase, Regulatory-chain, C-terminal domain"/>
    <property type="match status" value="1"/>
</dbReference>
<dbReference type="SUPFAM" id="SSF54893">
    <property type="entry name" value="Aspartate carbamoyltransferase, Regulatory-chain, N-terminal domain"/>
    <property type="match status" value="1"/>
</dbReference>
<protein>
    <recommendedName>
        <fullName evidence="1">Aspartate carbamoyltransferase regulatory chain</fullName>
    </recommendedName>
</protein>